<sequence>MSDATSMKHPSGLTSGDFTAAEEPFALFAEWFAEAVASEPNDPNAMALATVDADGLPDVRMVLMKDYDATGFVFYSHLASQKGQELAANPKAALLFHWKSLRRQVRVRGLVAPVTDAEADAYFATRPKQAQIGAWASKQSQPLESRFAFEQAIAKVAAKHLLGEVPRPPGWSGWRVTPSHIEFWHDRPFRLHDRIEFRRDDPAHPWSKTRLYP</sequence>
<feature type="chain" id="PRO_0000292321" description="Pyridoxine/pyridoxamine 5'-phosphate oxidase">
    <location>
        <begin position="1"/>
        <end position="213"/>
    </location>
</feature>
<feature type="binding site" evidence="1">
    <location>
        <begin position="60"/>
        <end position="65"/>
    </location>
    <ligand>
        <name>FMN</name>
        <dbReference type="ChEBI" id="CHEBI:58210"/>
    </ligand>
</feature>
<feature type="binding site" evidence="1">
    <location>
        <position position="65"/>
    </location>
    <ligand>
        <name>substrate</name>
    </ligand>
</feature>
<feature type="binding site" evidence="1">
    <location>
        <begin position="75"/>
        <end position="76"/>
    </location>
    <ligand>
        <name>FMN</name>
        <dbReference type="ChEBI" id="CHEBI:58210"/>
    </ligand>
</feature>
<feature type="binding site" evidence="1">
    <location>
        <position position="82"/>
    </location>
    <ligand>
        <name>FMN</name>
        <dbReference type="ChEBI" id="CHEBI:58210"/>
    </ligand>
</feature>
<feature type="binding site" evidence="1">
    <location>
        <position position="104"/>
    </location>
    <ligand>
        <name>FMN</name>
        <dbReference type="ChEBI" id="CHEBI:58210"/>
    </ligand>
</feature>
<feature type="binding site" evidence="1">
    <location>
        <position position="122"/>
    </location>
    <ligand>
        <name>substrate</name>
    </ligand>
</feature>
<feature type="binding site" evidence="1">
    <location>
        <position position="126"/>
    </location>
    <ligand>
        <name>substrate</name>
    </ligand>
</feature>
<feature type="binding site" evidence="1">
    <location>
        <begin position="139"/>
        <end position="140"/>
    </location>
    <ligand>
        <name>FMN</name>
        <dbReference type="ChEBI" id="CHEBI:58210"/>
    </ligand>
</feature>
<feature type="binding site" evidence="1">
    <location>
        <position position="184"/>
    </location>
    <ligand>
        <name>FMN</name>
        <dbReference type="ChEBI" id="CHEBI:58210"/>
    </ligand>
</feature>
<feature type="binding site" evidence="1">
    <location>
        <begin position="190"/>
        <end position="192"/>
    </location>
    <ligand>
        <name>substrate</name>
    </ligand>
</feature>
<feature type="binding site" evidence="1">
    <location>
        <position position="194"/>
    </location>
    <ligand>
        <name>FMN</name>
        <dbReference type="ChEBI" id="CHEBI:58210"/>
    </ligand>
</feature>
<dbReference type="EC" id="1.4.3.5" evidence="1"/>
<dbReference type="EMBL" id="CP000463">
    <property type="protein sequence ID" value="ABJ08514.1"/>
    <property type="molecule type" value="Genomic_DNA"/>
</dbReference>
<dbReference type="SMR" id="Q07HS0"/>
<dbReference type="STRING" id="316055.RPE_4594"/>
<dbReference type="KEGG" id="rpe:RPE_4594"/>
<dbReference type="eggNOG" id="COG0259">
    <property type="taxonomic scope" value="Bacteria"/>
</dbReference>
<dbReference type="HOGENOM" id="CLU_032263_2_2_5"/>
<dbReference type="OrthoDB" id="9780392at2"/>
<dbReference type="UniPathway" id="UPA01068">
    <property type="reaction ID" value="UER00304"/>
</dbReference>
<dbReference type="UniPathway" id="UPA01068">
    <property type="reaction ID" value="UER00305"/>
</dbReference>
<dbReference type="GO" id="GO:0010181">
    <property type="term" value="F:FMN binding"/>
    <property type="evidence" value="ECO:0007669"/>
    <property type="project" value="UniProtKB-UniRule"/>
</dbReference>
<dbReference type="GO" id="GO:0004733">
    <property type="term" value="F:pyridoxamine phosphate oxidase activity"/>
    <property type="evidence" value="ECO:0007669"/>
    <property type="project" value="UniProtKB-UniRule"/>
</dbReference>
<dbReference type="GO" id="GO:0008615">
    <property type="term" value="P:pyridoxine biosynthetic process"/>
    <property type="evidence" value="ECO:0007669"/>
    <property type="project" value="UniProtKB-KW"/>
</dbReference>
<dbReference type="FunFam" id="2.30.110.10:FF:000012">
    <property type="entry name" value="Predicted protein"/>
    <property type="match status" value="1"/>
</dbReference>
<dbReference type="Gene3D" id="2.30.110.10">
    <property type="entry name" value="Electron Transport, Fmn-binding Protein, Chain A"/>
    <property type="match status" value="1"/>
</dbReference>
<dbReference type="HAMAP" id="MF_01629">
    <property type="entry name" value="PdxH"/>
    <property type="match status" value="1"/>
</dbReference>
<dbReference type="InterPro" id="IPR000659">
    <property type="entry name" value="Pyridox_Oxase"/>
</dbReference>
<dbReference type="InterPro" id="IPR019740">
    <property type="entry name" value="Pyridox_Oxase_CS"/>
</dbReference>
<dbReference type="InterPro" id="IPR011576">
    <property type="entry name" value="Pyridox_Oxase_N"/>
</dbReference>
<dbReference type="InterPro" id="IPR019576">
    <property type="entry name" value="Pyridoxamine_oxidase_dimer_C"/>
</dbReference>
<dbReference type="InterPro" id="IPR012349">
    <property type="entry name" value="Split_barrel_FMN-bd"/>
</dbReference>
<dbReference type="NCBIfam" id="TIGR00558">
    <property type="entry name" value="pdxH"/>
    <property type="match status" value="1"/>
</dbReference>
<dbReference type="NCBIfam" id="NF004231">
    <property type="entry name" value="PRK05679.1"/>
    <property type="match status" value="1"/>
</dbReference>
<dbReference type="PANTHER" id="PTHR10851:SF0">
    <property type="entry name" value="PYRIDOXINE-5'-PHOSPHATE OXIDASE"/>
    <property type="match status" value="1"/>
</dbReference>
<dbReference type="PANTHER" id="PTHR10851">
    <property type="entry name" value="PYRIDOXINE-5-PHOSPHATE OXIDASE"/>
    <property type="match status" value="1"/>
</dbReference>
<dbReference type="Pfam" id="PF10590">
    <property type="entry name" value="PNP_phzG_C"/>
    <property type="match status" value="1"/>
</dbReference>
<dbReference type="Pfam" id="PF01243">
    <property type="entry name" value="PNPOx_N"/>
    <property type="match status" value="1"/>
</dbReference>
<dbReference type="PIRSF" id="PIRSF000190">
    <property type="entry name" value="Pyd_amn-ph_oxd"/>
    <property type="match status" value="1"/>
</dbReference>
<dbReference type="SUPFAM" id="SSF50475">
    <property type="entry name" value="FMN-binding split barrel"/>
    <property type="match status" value="1"/>
</dbReference>
<dbReference type="PROSITE" id="PS01064">
    <property type="entry name" value="PYRIDOX_OXIDASE"/>
    <property type="match status" value="1"/>
</dbReference>
<proteinExistence type="inferred from homology"/>
<evidence type="ECO:0000255" key="1">
    <source>
        <dbReference type="HAMAP-Rule" id="MF_01629"/>
    </source>
</evidence>
<gene>
    <name evidence="1" type="primary">pdxH</name>
    <name type="ordered locus">RPE_4594</name>
</gene>
<accession>Q07HS0</accession>
<reference key="1">
    <citation type="submission" date="2006-09" db="EMBL/GenBank/DDBJ databases">
        <title>Complete sequence of Rhodopseudomonas palustris BisA53.</title>
        <authorList>
            <consortium name="US DOE Joint Genome Institute"/>
            <person name="Copeland A."/>
            <person name="Lucas S."/>
            <person name="Lapidus A."/>
            <person name="Barry K."/>
            <person name="Detter J.C."/>
            <person name="Glavina del Rio T."/>
            <person name="Hammon N."/>
            <person name="Israni S."/>
            <person name="Dalin E."/>
            <person name="Tice H."/>
            <person name="Pitluck S."/>
            <person name="Chain P."/>
            <person name="Malfatti S."/>
            <person name="Shin M."/>
            <person name="Vergez L."/>
            <person name="Schmutz J."/>
            <person name="Larimer F."/>
            <person name="Land M."/>
            <person name="Hauser L."/>
            <person name="Pelletier D.A."/>
            <person name="Kyrpides N."/>
            <person name="Kim E."/>
            <person name="Harwood C.S."/>
            <person name="Oda Y."/>
            <person name="Richardson P."/>
        </authorList>
    </citation>
    <scope>NUCLEOTIDE SEQUENCE [LARGE SCALE GENOMIC DNA]</scope>
    <source>
        <strain>BisA53</strain>
    </source>
</reference>
<comment type="function">
    <text evidence="1">Catalyzes the oxidation of either pyridoxine 5'-phosphate (PNP) or pyridoxamine 5'-phosphate (PMP) into pyridoxal 5'-phosphate (PLP).</text>
</comment>
<comment type="catalytic activity">
    <reaction evidence="1">
        <text>pyridoxamine 5'-phosphate + O2 + H2O = pyridoxal 5'-phosphate + H2O2 + NH4(+)</text>
        <dbReference type="Rhea" id="RHEA:15817"/>
        <dbReference type="ChEBI" id="CHEBI:15377"/>
        <dbReference type="ChEBI" id="CHEBI:15379"/>
        <dbReference type="ChEBI" id="CHEBI:16240"/>
        <dbReference type="ChEBI" id="CHEBI:28938"/>
        <dbReference type="ChEBI" id="CHEBI:58451"/>
        <dbReference type="ChEBI" id="CHEBI:597326"/>
        <dbReference type="EC" id="1.4.3.5"/>
    </reaction>
</comment>
<comment type="catalytic activity">
    <reaction evidence="1">
        <text>pyridoxine 5'-phosphate + O2 = pyridoxal 5'-phosphate + H2O2</text>
        <dbReference type="Rhea" id="RHEA:15149"/>
        <dbReference type="ChEBI" id="CHEBI:15379"/>
        <dbReference type="ChEBI" id="CHEBI:16240"/>
        <dbReference type="ChEBI" id="CHEBI:58589"/>
        <dbReference type="ChEBI" id="CHEBI:597326"/>
        <dbReference type="EC" id="1.4.3.5"/>
    </reaction>
</comment>
<comment type="cofactor">
    <cofactor evidence="1">
        <name>FMN</name>
        <dbReference type="ChEBI" id="CHEBI:58210"/>
    </cofactor>
    <text evidence="1">Binds 1 FMN per subunit.</text>
</comment>
<comment type="pathway">
    <text evidence="1">Cofactor metabolism; pyridoxal 5'-phosphate salvage; pyridoxal 5'-phosphate from pyridoxamine 5'-phosphate: step 1/1.</text>
</comment>
<comment type="pathway">
    <text evidence="1">Cofactor metabolism; pyridoxal 5'-phosphate salvage; pyridoxal 5'-phosphate from pyridoxine 5'-phosphate: step 1/1.</text>
</comment>
<comment type="subunit">
    <text evidence="1">Homodimer.</text>
</comment>
<comment type="similarity">
    <text evidence="1">Belongs to the pyridoxamine 5'-phosphate oxidase family.</text>
</comment>
<protein>
    <recommendedName>
        <fullName evidence="1">Pyridoxine/pyridoxamine 5'-phosphate oxidase</fullName>
        <ecNumber evidence="1">1.4.3.5</ecNumber>
    </recommendedName>
    <alternativeName>
        <fullName evidence="1">PNP/PMP oxidase</fullName>
        <shortName evidence="1">PNPOx</shortName>
    </alternativeName>
    <alternativeName>
        <fullName evidence="1">Pyridoxal 5'-phosphate synthase</fullName>
    </alternativeName>
</protein>
<keyword id="KW-0285">Flavoprotein</keyword>
<keyword id="KW-0288">FMN</keyword>
<keyword id="KW-0560">Oxidoreductase</keyword>
<keyword id="KW-0664">Pyridoxine biosynthesis</keyword>
<name>PDXH_RHOP5</name>
<organism>
    <name type="scientific">Rhodopseudomonas palustris (strain BisA53)</name>
    <dbReference type="NCBI Taxonomy" id="316055"/>
    <lineage>
        <taxon>Bacteria</taxon>
        <taxon>Pseudomonadati</taxon>
        <taxon>Pseudomonadota</taxon>
        <taxon>Alphaproteobacteria</taxon>
        <taxon>Hyphomicrobiales</taxon>
        <taxon>Nitrobacteraceae</taxon>
        <taxon>Rhodopseudomonas</taxon>
    </lineage>
</organism>